<name>HBA2_PLEWA</name>
<reference key="1">
    <citation type="journal article" date="1986" name="Gene">
        <title>Cloning and sequencing of mRNAs coding for two adult alpha globin chains of the salamander Pleurodeles waltlii.</title>
        <authorList>
            <person name="Flavin M."/>
            <person name="Romeo P.-H."/>
            <person name="Cohen-Solal M."/>
            <person name="Duprat A.-M."/>
            <person name="Valentin C."/>
            <person name="Rosa J."/>
        </authorList>
    </citation>
    <scope>NUCLEOTIDE SEQUENCE [MRNA]</scope>
</reference>
<protein>
    <recommendedName>
        <fullName>Hemoglobin subunit alpha-2</fullName>
    </recommendedName>
    <alternativeName>
        <fullName>Alpha-2-globin</fullName>
    </alternativeName>
    <alternativeName>
        <fullName>Hemoglobin alpha-2 chain</fullName>
    </alternativeName>
    <alternativeName>
        <fullName>Hemoglobin alpha-minor chain</fullName>
    </alternativeName>
</protein>
<proteinExistence type="evidence at transcript level"/>
<organism>
    <name type="scientific">Pleurodeles waltl</name>
    <name type="common">Iberian ribbed newt</name>
    <dbReference type="NCBI Taxonomy" id="8319"/>
    <lineage>
        <taxon>Eukaryota</taxon>
        <taxon>Metazoa</taxon>
        <taxon>Chordata</taxon>
        <taxon>Craniata</taxon>
        <taxon>Vertebrata</taxon>
        <taxon>Euteleostomi</taxon>
        <taxon>Amphibia</taxon>
        <taxon>Batrachia</taxon>
        <taxon>Caudata</taxon>
        <taxon>Salamandroidea</taxon>
        <taxon>Salamandridae</taxon>
        <taxon>Pleurodelinae</taxon>
        <taxon>Pleurodeles</taxon>
    </lineage>
</organism>
<comment type="function">
    <text>Involved in oxygen transport from the lung to the various peripheral tissues.</text>
</comment>
<comment type="subunit">
    <text>Minor hemoglobin is a heterotetramer of two alpha-2 chains and two beta-2 chains.</text>
</comment>
<comment type="tissue specificity">
    <text>Red blood cells.</text>
</comment>
<comment type="similarity">
    <text evidence="1">Belongs to the globin family.</text>
</comment>
<dbReference type="EMBL" id="M13691">
    <property type="protein sequence ID" value="AAA49613.1"/>
    <property type="molecule type" value="mRNA"/>
</dbReference>
<dbReference type="PIR" id="B25640">
    <property type="entry name" value="HANERM"/>
</dbReference>
<dbReference type="SMR" id="P06640"/>
<dbReference type="GO" id="GO:0072562">
    <property type="term" value="C:blood microparticle"/>
    <property type="evidence" value="ECO:0007669"/>
    <property type="project" value="TreeGrafter"/>
</dbReference>
<dbReference type="GO" id="GO:0031838">
    <property type="term" value="C:haptoglobin-hemoglobin complex"/>
    <property type="evidence" value="ECO:0007669"/>
    <property type="project" value="TreeGrafter"/>
</dbReference>
<dbReference type="GO" id="GO:0005833">
    <property type="term" value="C:hemoglobin complex"/>
    <property type="evidence" value="ECO:0007669"/>
    <property type="project" value="InterPro"/>
</dbReference>
<dbReference type="GO" id="GO:0031720">
    <property type="term" value="F:haptoglobin binding"/>
    <property type="evidence" value="ECO:0007669"/>
    <property type="project" value="TreeGrafter"/>
</dbReference>
<dbReference type="GO" id="GO:0020037">
    <property type="term" value="F:heme binding"/>
    <property type="evidence" value="ECO:0007669"/>
    <property type="project" value="InterPro"/>
</dbReference>
<dbReference type="GO" id="GO:0046872">
    <property type="term" value="F:metal ion binding"/>
    <property type="evidence" value="ECO:0007669"/>
    <property type="project" value="UniProtKB-KW"/>
</dbReference>
<dbReference type="GO" id="GO:0043177">
    <property type="term" value="F:organic acid binding"/>
    <property type="evidence" value="ECO:0007669"/>
    <property type="project" value="TreeGrafter"/>
</dbReference>
<dbReference type="GO" id="GO:0019825">
    <property type="term" value="F:oxygen binding"/>
    <property type="evidence" value="ECO:0007669"/>
    <property type="project" value="InterPro"/>
</dbReference>
<dbReference type="GO" id="GO:0005344">
    <property type="term" value="F:oxygen carrier activity"/>
    <property type="evidence" value="ECO:0007669"/>
    <property type="project" value="UniProtKB-KW"/>
</dbReference>
<dbReference type="GO" id="GO:0004601">
    <property type="term" value="F:peroxidase activity"/>
    <property type="evidence" value="ECO:0007669"/>
    <property type="project" value="TreeGrafter"/>
</dbReference>
<dbReference type="GO" id="GO:0042744">
    <property type="term" value="P:hydrogen peroxide catabolic process"/>
    <property type="evidence" value="ECO:0007669"/>
    <property type="project" value="TreeGrafter"/>
</dbReference>
<dbReference type="CDD" id="cd08927">
    <property type="entry name" value="Hb-alpha-like"/>
    <property type="match status" value="1"/>
</dbReference>
<dbReference type="FunFam" id="1.10.490.10:FF:000002">
    <property type="entry name" value="Hemoglobin subunit alpha"/>
    <property type="match status" value="1"/>
</dbReference>
<dbReference type="Gene3D" id="1.10.490.10">
    <property type="entry name" value="Globins"/>
    <property type="match status" value="1"/>
</dbReference>
<dbReference type="InterPro" id="IPR000971">
    <property type="entry name" value="Globin"/>
</dbReference>
<dbReference type="InterPro" id="IPR009050">
    <property type="entry name" value="Globin-like_sf"/>
</dbReference>
<dbReference type="InterPro" id="IPR012292">
    <property type="entry name" value="Globin/Proto"/>
</dbReference>
<dbReference type="InterPro" id="IPR002338">
    <property type="entry name" value="Hemoglobin_a-typ"/>
</dbReference>
<dbReference type="InterPro" id="IPR050056">
    <property type="entry name" value="Hemoglobin_oxygen_transport"/>
</dbReference>
<dbReference type="PANTHER" id="PTHR11442">
    <property type="entry name" value="HEMOGLOBIN FAMILY MEMBER"/>
    <property type="match status" value="1"/>
</dbReference>
<dbReference type="PANTHER" id="PTHR11442:SF48">
    <property type="entry name" value="HEMOGLOBIN SUBUNIT ALPHA"/>
    <property type="match status" value="1"/>
</dbReference>
<dbReference type="Pfam" id="PF00042">
    <property type="entry name" value="Globin"/>
    <property type="match status" value="1"/>
</dbReference>
<dbReference type="PRINTS" id="PR00612">
    <property type="entry name" value="ALPHAHAEM"/>
</dbReference>
<dbReference type="SUPFAM" id="SSF46458">
    <property type="entry name" value="Globin-like"/>
    <property type="match status" value="1"/>
</dbReference>
<dbReference type="PROSITE" id="PS01033">
    <property type="entry name" value="GLOBIN"/>
    <property type="match status" value="1"/>
</dbReference>
<feature type="chain" id="PRO_0000052734" description="Hemoglobin subunit alpha-2">
    <location>
        <begin position="1" status="less than"/>
        <end position="133"/>
    </location>
</feature>
<feature type="domain" description="Globin" evidence="1">
    <location>
        <begin position="1"/>
        <end position="133"/>
    </location>
</feature>
<feature type="binding site" evidence="1">
    <location>
        <position position="50"/>
    </location>
    <ligand>
        <name>O2</name>
        <dbReference type="ChEBI" id="CHEBI:15379"/>
    </ligand>
</feature>
<feature type="binding site" description="proximal binding residue" evidence="1">
    <location>
        <position position="79"/>
    </location>
    <ligand>
        <name>heme b</name>
        <dbReference type="ChEBI" id="CHEBI:60344"/>
    </ligand>
    <ligandPart>
        <name>Fe</name>
        <dbReference type="ChEBI" id="CHEBI:18248"/>
    </ligandPart>
</feature>
<feature type="non-terminal residue">
    <location>
        <position position="1"/>
    </location>
</feature>
<evidence type="ECO:0000255" key="1">
    <source>
        <dbReference type="PROSITE-ProRule" id="PRU00238"/>
    </source>
</evidence>
<sequence>NVKAVWEHVKGHEEVYGAEALYRAFLCDPQTQTYFAGKDLSENSAFLHSHGKKVMCALTNAIAHIDDIDGCMSKLSDKHAHELMVDPGNFDILAHHILTVLAMFLSQLLTCANHRSVDKFLSCVKNVLTSRYR</sequence>
<keyword id="KW-0349">Heme</keyword>
<keyword id="KW-0408">Iron</keyword>
<keyword id="KW-0479">Metal-binding</keyword>
<keyword id="KW-0561">Oxygen transport</keyword>
<keyword id="KW-0813">Transport</keyword>
<accession>P06640</accession>